<name>GLRX1_VARV</name>
<organism>
    <name type="scientific">Variola virus</name>
    <dbReference type="NCBI Taxonomy" id="10255"/>
    <lineage>
        <taxon>Viruses</taxon>
        <taxon>Varidnaviria</taxon>
        <taxon>Bamfordvirae</taxon>
        <taxon>Nucleocytoviricota</taxon>
        <taxon>Pokkesviricetes</taxon>
        <taxon>Chitovirales</taxon>
        <taxon>Poxviridae</taxon>
        <taxon>Chordopoxvirinae</taxon>
        <taxon>Orthopoxvirus</taxon>
    </lineage>
</organism>
<gene>
    <name type="primary">OPG075</name>
    <name type="ORF">O2L</name>
</gene>
<reference key="1">
    <citation type="journal article" date="1993" name="Nature">
        <title>Potential virulence determinants in terminal regions of variola smallpox virus genome.</title>
        <authorList>
            <person name="Massung R.F."/>
            <person name="Esposito J.J."/>
            <person name="Liu L.I."/>
            <person name="Qi J."/>
            <person name="Utterback T.R."/>
            <person name="Knight J.C."/>
            <person name="Aubin L."/>
            <person name="Yuran T.E."/>
            <person name="Parsons J.M."/>
            <person name="Loparev V.N."/>
            <person name="Selivanov N.A."/>
            <person name="Cavallaro K.F."/>
            <person name="Kerlavage A.R."/>
            <person name="Mahy B.W.J."/>
            <person name="Venter J.C."/>
        </authorList>
    </citation>
    <scope>NUCLEOTIDE SEQUENCE [GENOMIC DNA]</scope>
    <source>
        <strain>Bangladesh-1975</strain>
    </source>
</reference>
<reference key="2">
    <citation type="journal article" date="2000" name="Virology">
        <title>Alastrim smallpox variola minor virus genome DNA sequences.</title>
        <authorList>
            <person name="Shchelkunov S.N."/>
            <person name="Totmenin A.V."/>
            <person name="Loparev V.N."/>
            <person name="Safronov P.F."/>
            <person name="Gutorov V.V."/>
            <person name="Chizhikov V.E."/>
            <person name="Knight J.C."/>
            <person name="Parsons J.M."/>
            <person name="Massung R.F."/>
            <person name="Esposito J.J."/>
        </authorList>
    </citation>
    <scope>NUCLEOTIDE SEQUENCE [LARGE SCALE GENOMIC DNA]</scope>
    <source>
        <strain>Garcia-1966</strain>
    </source>
</reference>
<keyword id="KW-1015">Disulfide bond</keyword>
<keyword id="KW-0249">Electron transport</keyword>
<keyword id="KW-0676">Redox-active center</keyword>
<keyword id="KW-0813">Transport</keyword>
<keyword id="KW-0946">Virion</keyword>
<evidence type="ECO:0000250" key="1"/>
<evidence type="ECO:0000250" key="2">
    <source>
        <dbReference type="UniProtKB" id="P68692"/>
    </source>
</evidence>
<evidence type="ECO:0000255" key="3">
    <source>
        <dbReference type="PROSITE-ProRule" id="PRU00686"/>
    </source>
</evidence>
<evidence type="ECO:0000305" key="4"/>
<comment type="function">
    <text evidence="1">Displays thioltransferase and dehydroascorbate reductase activities.</text>
</comment>
<comment type="subcellular location">
    <subcellularLocation>
        <location>Virion</location>
    </subcellularLocation>
    <text evidence="1">Localizes to the virion core.</text>
</comment>
<comment type="induction">
    <text evidence="2">Expressed in the intermediate phase of the viral replicative cycle.</text>
</comment>
<comment type="similarity">
    <text evidence="4">Belongs to the glutaredoxin family.</text>
</comment>
<sequence length="108" mass="12349">MAEEFVQQRLTNNKVTIFVKFTCPFCRNALDILNKFSFKRGAYEIVDIKEFKPENKLHDYFEQITGGRTVPRIFFGKTSIGGYSDLLEIDNMDALGDILSSIGVLRTC</sequence>
<dbReference type="EMBL" id="L22579">
    <property type="protein sequence ID" value="AAA60802.1"/>
    <property type="molecule type" value="Genomic_DNA"/>
</dbReference>
<dbReference type="EMBL" id="Y16780">
    <property type="protein sequence ID" value="CAB54654.1"/>
    <property type="molecule type" value="Genomic_DNA"/>
</dbReference>
<dbReference type="PIR" id="D72157">
    <property type="entry name" value="D72157"/>
</dbReference>
<dbReference type="PIR" id="T28492">
    <property type="entry name" value="T28492"/>
</dbReference>
<dbReference type="SMR" id="P0DOR0"/>
<dbReference type="KEGG" id="vg:1486484"/>
<dbReference type="Proteomes" id="UP000111493">
    <property type="component" value="Segment"/>
</dbReference>
<dbReference type="Proteomes" id="UP000119805">
    <property type="component" value="Segment"/>
</dbReference>
<dbReference type="GO" id="GO:0044423">
    <property type="term" value="C:virion component"/>
    <property type="evidence" value="ECO:0007669"/>
    <property type="project" value="UniProtKB-KW"/>
</dbReference>
<dbReference type="GO" id="GO:0015038">
    <property type="term" value="F:glutathione disulfide oxidoreductase activity"/>
    <property type="evidence" value="ECO:0007669"/>
    <property type="project" value="TreeGrafter"/>
</dbReference>
<dbReference type="Gene3D" id="3.40.30.10">
    <property type="entry name" value="Glutaredoxin"/>
    <property type="match status" value="1"/>
</dbReference>
<dbReference type="InterPro" id="IPR011767">
    <property type="entry name" value="GLR_AS"/>
</dbReference>
<dbReference type="InterPro" id="IPR047185">
    <property type="entry name" value="GLRX1"/>
</dbReference>
<dbReference type="InterPro" id="IPR002109">
    <property type="entry name" value="Glutaredoxin"/>
</dbReference>
<dbReference type="InterPro" id="IPR011899">
    <property type="entry name" value="Glutaredoxin_euk/vir"/>
</dbReference>
<dbReference type="InterPro" id="IPR014025">
    <property type="entry name" value="Glutaredoxin_subgr"/>
</dbReference>
<dbReference type="InterPro" id="IPR036249">
    <property type="entry name" value="Thioredoxin-like_sf"/>
</dbReference>
<dbReference type="NCBIfam" id="TIGR02180">
    <property type="entry name" value="GRX_euk"/>
    <property type="match status" value="1"/>
</dbReference>
<dbReference type="PANTHER" id="PTHR46185">
    <property type="entry name" value="GLUTAREDOXIN-1"/>
    <property type="match status" value="1"/>
</dbReference>
<dbReference type="PANTHER" id="PTHR46185:SF1">
    <property type="entry name" value="GLUTAREDOXIN-1"/>
    <property type="match status" value="1"/>
</dbReference>
<dbReference type="Pfam" id="PF00462">
    <property type="entry name" value="Glutaredoxin"/>
    <property type="match status" value="1"/>
</dbReference>
<dbReference type="PRINTS" id="PR00160">
    <property type="entry name" value="GLUTAREDOXIN"/>
</dbReference>
<dbReference type="SUPFAM" id="SSF52833">
    <property type="entry name" value="Thioredoxin-like"/>
    <property type="match status" value="1"/>
</dbReference>
<dbReference type="PROSITE" id="PS00195">
    <property type="entry name" value="GLUTAREDOXIN_1"/>
    <property type="match status" value="1"/>
</dbReference>
<dbReference type="PROSITE" id="PS51354">
    <property type="entry name" value="GLUTAREDOXIN_2"/>
    <property type="match status" value="1"/>
</dbReference>
<protein>
    <recommendedName>
        <fullName>Glutaredoxin-1</fullName>
    </recommendedName>
</protein>
<feature type="chain" id="PRO_0000448107" description="Glutaredoxin-1">
    <location>
        <begin position="1"/>
        <end position="108"/>
    </location>
</feature>
<feature type="domain" description="Glutaredoxin" evidence="3">
    <location>
        <begin position="3"/>
        <end position="106"/>
    </location>
</feature>
<feature type="disulfide bond" description="Redox-active" evidence="2">
    <location>
        <begin position="23"/>
        <end position="26"/>
    </location>
</feature>
<proteinExistence type="inferred from homology"/>
<accession>P0DOR0</accession>
<accession>P32983</accession>
<accession>Q76Q32</accession>
<organismHost>
    <name type="scientific">Homo sapiens</name>
    <name type="common">Human</name>
    <dbReference type="NCBI Taxonomy" id="9606"/>
</organismHost>